<accession>A6UT74</accession>
<proteinExistence type="inferred from homology"/>
<dbReference type="EC" id="4.1.99.17" evidence="1"/>
<dbReference type="EMBL" id="CP000743">
    <property type="protein sequence ID" value="ABR55696.1"/>
    <property type="molecule type" value="Genomic_DNA"/>
</dbReference>
<dbReference type="RefSeq" id="WP_011972828.1">
    <property type="nucleotide sequence ID" value="NC_009635.1"/>
</dbReference>
<dbReference type="SMR" id="A6UT74"/>
<dbReference type="STRING" id="419665.Maeo_0104"/>
<dbReference type="GeneID" id="5327383"/>
<dbReference type="KEGG" id="mae:Maeo_0104"/>
<dbReference type="eggNOG" id="arCOG02741">
    <property type="taxonomic scope" value="Archaea"/>
</dbReference>
<dbReference type="HOGENOM" id="CLU_013181_2_2_2"/>
<dbReference type="OrthoDB" id="335406at2157"/>
<dbReference type="UniPathway" id="UPA00060"/>
<dbReference type="Proteomes" id="UP000001106">
    <property type="component" value="Chromosome"/>
</dbReference>
<dbReference type="GO" id="GO:0051539">
    <property type="term" value="F:4 iron, 4 sulfur cluster binding"/>
    <property type="evidence" value="ECO:0007669"/>
    <property type="project" value="UniProtKB-KW"/>
</dbReference>
<dbReference type="GO" id="GO:0016830">
    <property type="term" value="F:carbon-carbon lyase activity"/>
    <property type="evidence" value="ECO:0007669"/>
    <property type="project" value="InterPro"/>
</dbReference>
<dbReference type="GO" id="GO:0008270">
    <property type="term" value="F:zinc ion binding"/>
    <property type="evidence" value="ECO:0007669"/>
    <property type="project" value="UniProtKB-UniRule"/>
</dbReference>
<dbReference type="GO" id="GO:0009228">
    <property type="term" value="P:thiamine biosynthetic process"/>
    <property type="evidence" value="ECO:0007669"/>
    <property type="project" value="UniProtKB-KW"/>
</dbReference>
<dbReference type="GO" id="GO:0009229">
    <property type="term" value="P:thiamine diphosphate biosynthetic process"/>
    <property type="evidence" value="ECO:0007669"/>
    <property type="project" value="UniProtKB-UniRule"/>
</dbReference>
<dbReference type="FunFam" id="3.20.20.540:FF:000001">
    <property type="entry name" value="Phosphomethylpyrimidine synthase"/>
    <property type="match status" value="1"/>
</dbReference>
<dbReference type="Gene3D" id="6.10.250.620">
    <property type="match status" value="1"/>
</dbReference>
<dbReference type="Gene3D" id="3.20.20.540">
    <property type="entry name" value="Radical SAM ThiC family, central domain"/>
    <property type="match status" value="1"/>
</dbReference>
<dbReference type="HAMAP" id="MF_00089">
    <property type="entry name" value="ThiC"/>
    <property type="match status" value="1"/>
</dbReference>
<dbReference type="InterPro" id="IPR037509">
    <property type="entry name" value="ThiC"/>
</dbReference>
<dbReference type="InterPro" id="IPR038521">
    <property type="entry name" value="ThiC/Bza_core_dom"/>
</dbReference>
<dbReference type="InterPro" id="IPR002817">
    <property type="entry name" value="ThiC/BzaA/B"/>
</dbReference>
<dbReference type="NCBIfam" id="NF009895">
    <property type="entry name" value="PRK13352.1"/>
    <property type="match status" value="1"/>
</dbReference>
<dbReference type="NCBIfam" id="TIGR00190">
    <property type="entry name" value="thiC"/>
    <property type="match status" value="1"/>
</dbReference>
<dbReference type="PANTHER" id="PTHR30557:SF1">
    <property type="entry name" value="PHOSPHOMETHYLPYRIMIDINE SYNTHASE, CHLOROPLASTIC"/>
    <property type="match status" value="1"/>
</dbReference>
<dbReference type="PANTHER" id="PTHR30557">
    <property type="entry name" value="THIAMINE BIOSYNTHESIS PROTEIN THIC"/>
    <property type="match status" value="1"/>
</dbReference>
<dbReference type="Pfam" id="PF01964">
    <property type="entry name" value="ThiC_Rad_SAM"/>
    <property type="match status" value="1"/>
</dbReference>
<dbReference type="SFLD" id="SFLDF00407">
    <property type="entry name" value="phosphomethylpyrimidine_syntha"/>
    <property type="match status" value="1"/>
</dbReference>
<dbReference type="SFLD" id="SFLDG01114">
    <property type="entry name" value="phosphomethylpyrimidine_syntha"/>
    <property type="match status" value="1"/>
</dbReference>
<dbReference type="SFLD" id="SFLDS00113">
    <property type="entry name" value="Radical_SAM_Phosphomethylpyrim"/>
    <property type="match status" value="1"/>
</dbReference>
<protein>
    <recommendedName>
        <fullName evidence="1">Phosphomethylpyrimidine synthase</fullName>
        <ecNumber evidence="1">4.1.99.17</ecNumber>
    </recommendedName>
    <alternativeName>
        <fullName evidence="1">Hydroxymethylpyrimidine phosphate synthase</fullName>
        <shortName evidence="1">HMP-P synthase</shortName>
        <shortName evidence="1">HMP-phosphate synthase</shortName>
        <shortName evidence="1">HMPP synthase</shortName>
    </alternativeName>
    <alternativeName>
        <fullName evidence="1">Thiamine biosynthesis protein ThiC</fullName>
    </alternativeName>
</protein>
<sequence>MTQMTDAKNNIITKEMEFVAKEENIAVEKIRKWVAKGFVVIPKNIHRNTKPVGIGDNLKTKVNVNLGTSTDCIDIDMEIRKAIISEEYGADAIMDLSTGGELPEIRKQILKNTTLPVGTVPMYEIGIESKNKYGRVIDFDEDIIFNTIERQAKEGVDFMTLHCGITKHTIDTLNNDDRIMGVVSRGGAYITAYIMHHQKENPLYSQFDYLLEMLKEHDVTLSLGDGMRPGCLCDHTDRPQIQELIVLGELVDRCREAGVQVMVEGPGHVPLNNVETNMKIQKTLCKNAPFYVLGPLPTDLAMGYDHITSAIGGALAAYSGANFLCYVTPAEHVRLMNEDDVREGLIASKIAAQVADVAKGNKQAWAKEKEMAIARKNHDWEKQFELSIDSDKPKKMREELPPKEEDACSVCGEYCALLMVEEAGKR</sequence>
<comment type="function">
    <text evidence="1">Catalyzes the synthesis of the hydroxymethylpyrimidine phosphate (HMP-P) moiety of thiamine from aminoimidazole ribotide (AIR) in a radical S-adenosyl-L-methionine (SAM)-dependent reaction.</text>
</comment>
<comment type="catalytic activity">
    <reaction evidence="1">
        <text>5-amino-1-(5-phospho-beta-D-ribosyl)imidazole + S-adenosyl-L-methionine = 4-amino-2-methyl-5-(phosphooxymethyl)pyrimidine + CO + 5'-deoxyadenosine + formate + L-methionine + 3 H(+)</text>
        <dbReference type="Rhea" id="RHEA:24840"/>
        <dbReference type="ChEBI" id="CHEBI:15378"/>
        <dbReference type="ChEBI" id="CHEBI:15740"/>
        <dbReference type="ChEBI" id="CHEBI:17245"/>
        <dbReference type="ChEBI" id="CHEBI:17319"/>
        <dbReference type="ChEBI" id="CHEBI:57844"/>
        <dbReference type="ChEBI" id="CHEBI:58354"/>
        <dbReference type="ChEBI" id="CHEBI:59789"/>
        <dbReference type="ChEBI" id="CHEBI:137981"/>
        <dbReference type="EC" id="4.1.99.17"/>
    </reaction>
</comment>
<comment type="cofactor">
    <cofactor evidence="1">
        <name>[4Fe-4S] cluster</name>
        <dbReference type="ChEBI" id="CHEBI:49883"/>
    </cofactor>
    <text evidence="1">Binds 1 [4Fe-4S] cluster per subunit. The cluster is coordinated with 3 cysteines and an exchangeable S-adenosyl-L-methionine.</text>
</comment>
<comment type="pathway">
    <text evidence="1">Cofactor biosynthesis; thiamine diphosphate biosynthesis.</text>
</comment>
<comment type="similarity">
    <text evidence="1">Belongs to the ThiC family.</text>
</comment>
<organism>
    <name type="scientific">Methanococcus aeolicus (strain ATCC BAA-1280 / DSM 17508 / OCM 812 / Nankai-3)</name>
    <dbReference type="NCBI Taxonomy" id="419665"/>
    <lineage>
        <taxon>Archaea</taxon>
        <taxon>Methanobacteriati</taxon>
        <taxon>Methanobacteriota</taxon>
        <taxon>Methanomada group</taxon>
        <taxon>Methanococci</taxon>
        <taxon>Methanococcales</taxon>
        <taxon>Methanococcaceae</taxon>
        <taxon>Methanococcus</taxon>
    </lineage>
</organism>
<keyword id="KW-0004">4Fe-4S</keyword>
<keyword id="KW-0408">Iron</keyword>
<keyword id="KW-0411">Iron-sulfur</keyword>
<keyword id="KW-0456">Lyase</keyword>
<keyword id="KW-0479">Metal-binding</keyword>
<keyword id="KW-0949">S-adenosyl-L-methionine</keyword>
<keyword id="KW-0784">Thiamine biosynthesis</keyword>
<keyword id="KW-0862">Zinc</keyword>
<evidence type="ECO:0000255" key="1">
    <source>
        <dbReference type="HAMAP-Rule" id="MF_00089"/>
    </source>
</evidence>
<feature type="chain" id="PRO_1000004768" description="Phosphomethylpyrimidine synthase">
    <location>
        <begin position="1"/>
        <end position="426"/>
    </location>
</feature>
<feature type="binding site" evidence="1">
    <location>
        <position position="65"/>
    </location>
    <ligand>
        <name>substrate</name>
    </ligand>
</feature>
<feature type="binding site" evidence="1">
    <location>
        <position position="94"/>
    </location>
    <ligand>
        <name>substrate</name>
    </ligand>
</feature>
<feature type="binding site" evidence="1">
    <location>
        <position position="123"/>
    </location>
    <ligand>
        <name>substrate</name>
    </ligand>
</feature>
<feature type="binding site" evidence="1">
    <location>
        <position position="162"/>
    </location>
    <ligand>
        <name>substrate</name>
    </ligand>
</feature>
<feature type="binding site" evidence="1">
    <location>
        <begin position="184"/>
        <end position="186"/>
    </location>
    <ligand>
        <name>substrate</name>
    </ligand>
</feature>
<feature type="binding site" evidence="1">
    <location>
        <begin position="225"/>
        <end position="228"/>
    </location>
    <ligand>
        <name>substrate</name>
    </ligand>
</feature>
<feature type="binding site" evidence="1">
    <location>
        <position position="264"/>
    </location>
    <ligand>
        <name>substrate</name>
    </ligand>
</feature>
<feature type="binding site" evidence="1">
    <location>
        <position position="268"/>
    </location>
    <ligand>
        <name>Zn(2+)</name>
        <dbReference type="ChEBI" id="CHEBI:29105"/>
    </ligand>
</feature>
<feature type="binding site" evidence="1">
    <location>
        <position position="291"/>
    </location>
    <ligand>
        <name>substrate</name>
    </ligand>
</feature>
<feature type="binding site" evidence="1">
    <location>
        <position position="332"/>
    </location>
    <ligand>
        <name>Zn(2+)</name>
        <dbReference type="ChEBI" id="CHEBI:29105"/>
    </ligand>
</feature>
<feature type="binding site" evidence="1">
    <location>
        <position position="408"/>
    </location>
    <ligand>
        <name>[4Fe-4S] cluster</name>
        <dbReference type="ChEBI" id="CHEBI:49883"/>
        <note>4Fe-4S-S-AdoMet</note>
    </ligand>
</feature>
<feature type="binding site" evidence="1">
    <location>
        <position position="411"/>
    </location>
    <ligand>
        <name>[4Fe-4S] cluster</name>
        <dbReference type="ChEBI" id="CHEBI:49883"/>
        <note>4Fe-4S-S-AdoMet</note>
    </ligand>
</feature>
<feature type="binding site" evidence="1">
    <location>
        <position position="415"/>
    </location>
    <ligand>
        <name>[4Fe-4S] cluster</name>
        <dbReference type="ChEBI" id="CHEBI:49883"/>
        <note>4Fe-4S-S-AdoMet</note>
    </ligand>
</feature>
<gene>
    <name evidence="1" type="primary">thiC</name>
    <name type="ordered locus">Maeo_0104</name>
</gene>
<name>THIC_META3</name>
<reference key="1">
    <citation type="submission" date="2007-06" db="EMBL/GenBank/DDBJ databases">
        <title>Complete sequence of Methanococcus aeolicus Nankai-3.</title>
        <authorList>
            <consortium name="US DOE Joint Genome Institute"/>
            <person name="Copeland A."/>
            <person name="Lucas S."/>
            <person name="Lapidus A."/>
            <person name="Barry K."/>
            <person name="Glavina del Rio T."/>
            <person name="Dalin E."/>
            <person name="Tice H."/>
            <person name="Pitluck S."/>
            <person name="Chain P."/>
            <person name="Malfatti S."/>
            <person name="Shin M."/>
            <person name="Vergez L."/>
            <person name="Schmutz J."/>
            <person name="Larimer F."/>
            <person name="Land M."/>
            <person name="Hauser L."/>
            <person name="Kyrpides N."/>
            <person name="Lykidis A."/>
            <person name="Sieprawska-Lupa M."/>
            <person name="Whitman W.B."/>
            <person name="Richardson P."/>
        </authorList>
    </citation>
    <scope>NUCLEOTIDE SEQUENCE [LARGE SCALE GENOMIC DNA]</scope>
    <source>
        <strain>ATCC BAA-1280 / DSM 17508 / OCM 812 / Nankai-3</strain>
    </source>
</reference>